<keyword id="KW-0414">Isoprene biosynthesis</keyword>
<keyword id="KW-0460">Magnesium</keyword>
<keyword id="KW-0479">Metal-binding</keyword>
<keyword id="KW-1185">Reference proteome</keyword>
<keyword id="KW-0784">Thiamine biosynthesis</keyword>
<keyword id="KW-0786">Thiamine pyrophosphate</keyword>
<keyword id="KW-0808">Transferase</keyword>
<organism>
    <name type="scientific">Porphyromonas gingivalis (strain ATCC BAA-308 / W83)</name>
    <dbReference type="NCBI Taxonomy" id="242619"/>
    <lineage>
        <taxon>Bacteria</taxon>
        <taxon>Pseudomonadati</taxon>
        <taxon>Bacteroidota</taxon>
        <taxon>Bacteroidia</taxon>
        <taxon>Bacteroidales</taxon>
        <taxon>Porphyromonadaceae</taxon>
        <taxon>Porphyromonas</taxon>
    </lineage>
</organism>
<proteinExistence type="inferred from homology"/>
<sequence>MMEVRPTTLIDHINSPADLRALKPEQLPQVCRELRRYILEVLSVTPGHLGSSLGAVDFTVALHYVFDTPYDRIVWDVGHQAYSHKILTGRREDFRHLRQWGGISGFPSPKESEYDTFPAGHASNSISAALGMAVASAAKDEKRKVIAVIGDGSMTGGMAFEGLNNASSFPNNLLIILNDNNMSIDRNVGGLNRYMVDILTSKTYNTIRYDLYKGLRKINLISETNRKNLLRFNNSFKALLARESNLFEGFSIRYFGPVDGNNVLRLVEVLNQIKDMAGPKILHLRTIKGKGYSPAEKQATIWHAPGEFDIKSGERKKGENKPEPPKFQDVFGHTLVELADRDERVVGVTPAMPTGCSMTFLMKKYPNRAYDVGIAEGHAVTFSAGLAKEGLIPFCNIYSSFIQRGYDQVIHDVALSGSHVVICLDRAGLVGEDGATHHGVFDMAFLRCVPDIVVASPLNEHELRNLMLTAYKGYDGPMVIRYPRGKGVLTDWRNTPRLVEIARGRCLTEGEAIAFLSIGPIGNMVQKVVERLAEKGVSAAHYDMVFLKPLDEEMLHGIAKKFDTIISVEDGCIQGGFGSAVMEFMADHDYHPRIRRVGVPDRFIGQGSVPEQYADCGMDADSLLHLTEELLLHP</sequence>
<comment type="function">
    <text evidence="1">Catalyzes the acyloin condensation reaction between C atoms 2 and 3 of pyruvate and glyceraldehyde 3-phosphate to yield 1-deoxy-D-xylulose-5-phosphate (DXP).</text>
</comment>
<comment type="catalytic activity">
    <reaction evidence="1">
        <text>D-glyceraldehyde 3-phosphate + pyruvate + H(+) = 1-deoxy-D-xylulose 5-phosphate + CO2</text>
        <dbReference type="Rhea" id="RHEA:12605"/>
        <dbReference type="ChEBI" id="CHEBI:15361"/>
        <dbReference type="ChEBI" id="CHEBI:15378"/>
        <dbReference type="ChEBI" id="CHEBI:16526"/>
        <dbReference type="ChEBI" id="CHEBI:57792"/>
        <dbReference type="ChEBI" id="CHEBI:59776"/>
        <dbReference type="EC" id="2.2.1.7"/>
    </reaction>
</comment>
<comment type="cofactor">
    <cofactor evidence="1">
        <name>Mg(2+)</name>
        <dbReference type="ChEBI" id="CHEBI:18420"/>
    </cofactor>
    <text evidence="1">Binds 1 Mg(2+) ion per subunit.</text>
</comment>
<comment type="cofactor">
    <cofactor evidence="1">
        <name>thiamine diphosphate</name>
        <dbReference type="ChEBI" id="CHEBI:58937"/>
    </cofactor>
    <text evidence="1">Binds 1 thiamine pyrophosphate per subunit.</text>
</comment>
<comment type="pathway">
    <text evidence="1">Metabolic intermediate biosynthesis; 1-deoxy-D-xylulose 5-phosphate biosynthesis; 1-deoxy-D-xylulose 5-phosphate from D-glyceraldehyde 3-phosphate and pyruvate: step 1/1.</text>
</comment>
<comment type="subunit">
    <text evidence="1">Homodimer.</text>
</comment>
<comment type="similarity">
    <text evidence="1">Belongs to the transketolase family. DXPS subfamily.</text>
</comment>
<name>DXS_PORGI</name>
<accession>Q7MSZ3</accession>
<dbReference type="EC" id="2.2.1.7" evidence="1"/>
<dbReference type="EMBL" id="AE015924">
    <property type="protein sequence ID" value="AAQ67157.1"/>
    <property type="molecule type" value="Genomic_DNA"/>
</dbReference>
<dbReference type="RefSeq" id="WP_005874298.1">
    <property type="nucleotide sequence ID" value="NC_002950.2"/>
</dbReference>
<dbReference type="SMR" id="Q7MSZ3"/>
<dbReference type="STRING" id="242619.PG_2217"/>
<dbReference type="EnsemblBacteria" id="AAQ67157">
    <property type="protein sequence ID" value="AAQ67157"/>
    <property type="gene ID" value="PG_2217"/>
</dbReference>
<dbReference type="KEGG" id="pgi:PG_2217"/>
<dbReference type="PATRIC" id="fig|242619.8.peg.2068"/>
<dbReference type="eggNOG" id="COG1154">
    <property type="taxonomic scope" value="Bacteria"/>
</dbReference>
<dbReference type="HOGENOM" id="CLU_009227_1_4_10"/>
<dbReference type="BioCyc" id="PGIN242619:G1G02-2086-MONOMER"/>
<dbReference type="UniPathway" id="UPA00064">
    <property type="reaction ID" value="UER00091"/>
</dbReference>
<dbReference type="Proteomes" id="UP000000588">
    <property type="component" value="Chromosome"/>
</dbReference>
<dbReference type="GO" id="GO:0005829">
    <property type="term" value="C:cytosol"/>
    <property type="evidence" value="ECO:0007669"/>
    <property type="project" value="TreeGrafter"/>
</dbReference>
<dbReference type="GO" id="GO:0008661">
    <property type="term" value="F:1-deoxy-D-xylulose-5-phosphate synthase activity"/>
    <property type="evidence" value="ECO:0007669"/>
    <property type="project" value="UniProtKB-UniRule"/>
</dbReference>
<dbReference type="GO" id="GO:0000287">
    <property type="term" value="F:magnesium ion binding"/>
    <property type="evidence" value="ECO:0007669"/>
    <property type="project" value="UniProtKB-UniRule"/>
</dbReference>
<dbReference type="GO" id="GO:0030976">
    <property type="term" value="F:thiamine pyrophosphate binding"/>
    <property type="evidence" value="ECO:0007669"/>
    <property type="project" value="UniProtKB-UniRule"/>
</dbReference>
<dbReference type="GO" id="GO:0052865">
    <property type="term" value="P:1-deoxy-D-xylulose 5-phosphate biosynthetic process"/>
    <property type="evidence" value="ECO:0007669"/>
    <property type="project" value="UniProtKB-UniPathway"/>
</dbReference>
<dbReference type="GO" id="GO:0019288">
    <property type="term" value="P:isopentenyl diphosphate biosynthetic process, methylerythritol 4-phosphate pathway"/>
    <property type="evidence" value="ECO:0007669"/>
    <property type="project" value="TreeGrafter"/>
</dbReference>
<dbReference type="GO" id="GO:0016114">
    <property type="term" value="P:terpenoid biosynthetic process"/>
    <property type="evidence" value="ECO:0007669"/>
    <property type="project" value="UniProtKB-UniRule"/>
</dbReference>
<dbReference type="GO" id="GO:0009228">
    <property type="term" value="P:thiamine biosynthetic process"/>
    <property type="evidence" value="ECO:0007669"/>
    <property type="project" value="UniProtKB-UniRule"/>
</dbReference>
<dbReference type="CDD" id="cd02007">
    <property type="entry name" value="TPP_DXS"/>
    <property type="match status" value="1"/>
</dbReference>
<dbReference type="CDD" id="cd07033">
    <property type="entry name" value="TPP_PYR_DXS_TK_like"/>
    <property type="match status" value="1"/>
</dbReference>
<dbReference type="FunFam" id="3.40.50.920:FF:000002">
    <property type="entry name" value="1-deoxy-D-xylulose-5-phosphate synthase"/>
    <property type="match status" value="1"/>
</dbReference>
<dbReference type="FunFam" id="3.40.50.970:FF:000005">
    <property type="entry name" value="1-deoxy-D-xylulose-5-phosphate synthase"/>
    <property type="match status" value="1"/>
</dbReference>
<dbReference type="Gene3D" id="3.40.50.920">
    <property type="match status" value="1"/>
</dbReference>
<dbReference type="Gene3D" id="3.40.50.970">
    <property type="match status" value="2"/>
</dbReference>
<dbReference type="HAMAP" id="MF_00315">
    <property type="entry name" value="DXP_synth"/>
    <property type="match status" value="1"/>
</dbReference>
<dbReference type="InterPro" id="IPR005477">
    <property type="entry name" value="Dxylulose-5-P_synthase"/>
</dbReference>
<dbReference type="InterPro" id="IPR029061">
    <property type="entry name" value="THDP-binding"/>
</dbReference>
<dbReference type="InterPro" id="IPR009014">
    <property type="entry name" value="Transketo_C/PFOR_II"/>
</dbReference>
<dbReference type="InterPro" id="IPR005475">
    <property type="entry name" value="Transketolase-like_Pyr-bd"/>
</dbReference>
<dbReference type="InterPro" id="IPR020826">
    <property type="entry name" value="Transketolase_BS"/>
</dbReference>
<dbReference type="InterPro" id="IPR033248">
    <property type="entry name" value="Transketolase_C"/>
</dbReference>
<dbReference type="NCBIfam" id="TIGR00204">
    <property type="entry name" value="dxs"/>
    <property type="match status" value="1"/>
</dbReference>
<dbReference type="NCBIfam" id="NF003933">
    <property type="entry name" value="PRK05444.2-2"/>
    <property type="match status" value="1"/>
</dbReference>
<dbReference type="PANTHER" id="PTHR43322">
    <property type="entry name" value="1-D-DEOXYXYLULOSE 5-PHOSPHATE SYNTHASE-RELATED"/>
    <property type="match status" value="1"/>
</dbReference>
<dbReference type="PANTHER" id="PTHR43322:SF5">
    <property type="entry name" value="1-DEOXY-D-XYLULOSE-5-PHOSPHATE SYNTHASE, CHLOROPLASTIC"/>
    <property type="match status" value="1"/>
</dbReference>
<dbReference type="Pfam" id="PF13292">
    <property type="entry name" value="DXP_synthase_N"/>
    <property type="match status" value="1"/>
</dbReference>
<dbReference type="Pfam" id="PF02779">
    <property type="entry name" value="Transket_pyr"/>
    <property type="match status" value="1"/>
</dbReference>
<dbReference type="Pfam" id="PF02780">
    <property type="entry name" value="Transketolase_C"/>
    <property type="match status" value="1"/>
</dbReference>
<dbReference type="SMART" id="SM00861">
    <property type="entry name" value="Transket_pyr"/>
    <property type="match status" value="1"/>
</dbReference>
<dbReference type="SUPFAM" id="SSF52518">
    <property type="entry name" value="Thiamin diphosphate-binding fold (THDP-binding)"/>
    <property type="match status" value="2"/>
</dbReference>
<dbReference type="SUPFAM" id="SSF52922">
    <property type="entry name" value="TK C-terminal domain-like"/>
    <property type="match status" value="1"/>
</dbReference>
<dbReference type="PROSITE" id="PS00802">
    <property type="entry name" value="TRANSKETOLASE_2"/>
    <property type="match status" value="1"/>
</dbReference>
<gene>
    <name evidence="1" type="primary">dxs</name>
    <name type="ordered locus">PG_2217</name>
</gene>
<evidence type="ECO:0000255" key="1">
    <source>
        <dbReference type="HAMAP-Rule" id="MF_00315"/>
    </source>
</evidence>
<feature type="chain" id="PRO_0000189138" description="1-deoxy-D-xylulose-5-phosphate synthase">
    <location>
        <begin position="1"/>
        <end position="634"/>
    </location>
</feature>
<feature type="binding site" evidence="1">
    <location>
        <position position="79"/>
    </location>
    <ligand>
        <name>thiamine diphosphate</name>
        <dbReference type="ChEBI" id="CHEBI:58937"/>
    </ligand>
</feature>
<feature type="binding site" evidence="1">
    <location>
        <begin position="120"/>
        <end position="122"/>
    </location>
    <ligand>
        <name>thiamine diphosphate</name>
        <dbReference type="ChEBI" id="CHEBI:58937"/>
    </ligand>
</feature>
<feature type="binding site" evidence="1">
    <location>
        <position position="151"/>
    </location>
    <ligand>
        <name>Mg(2+)</name>
        <dbReference type="ChEBI" id="CHEBI:18420"/>
    </ligand>
</feature>
<feature type="binding site" evidence="1">
    <location>
        <begin position="152"/>
        <end position="153"/>
    </location>
    <ligand>
        <name>thiamine diphosphate</name>
        <dbReference type="ChEBI" id="CHEBI:58937"/>
    </ligand>
</feature>
<feature type="binding site" evidence="1">
    <location>
        <position position="180"/>
    </location>
    <ligand>
        <name>Mg(2+)</name>
        <dbReference type="ChEBI" id="CHEBI:18420"/>
    </ligand>
</feature>
<feature type="binding site" evidence="1">
    <location>
        <position position="180"/>
    </location>
    <ligand>
        <name>thiamine diphosphate</name>
        <dbReference type="ChEBI" id="CHEBI:58937"/>
    </ligand>
</feature>
<feature type="binding site" evidence="1">
    <location>
        <position position="292"/>
    </location>
    <ligand>
        <name>thiamine diphosphate</name>
        <dbReference type="ChEBI" id="CHEBI:58937"/>
    </ligand>
</feature>
<feature type="binding site" evidence="1">
    <location>
        <position position="376"/>
    </location>
    <ligand>
        <name>thiamine diphosphate</name>
        <dbReference type="ChEBI" id="CHEBI:58937"/>
    </ligand>
</feature>
<protein>
    <recommendedName>
        <fullName evidence="1">1-deoxy-D-xylulose-5-phosphate synthase</fullName>
        <ecNumber evidence="1">2.2.1.7</ecNumber>
    </recommendedName>
    <alternativeName>
        <fullName evidence="1">1-deoxyxylulose-5-phosphate synthase</fullName>
        <shortName evidence="1">DXP synthase</shortName>
        <shortName evidence="1">DXPS</shortName>
    </alternativeName>
</protein>
<reference key="1">
    <citation type="journal article" date="2003" name="J. Bacteriol.">
        <title>Complete genome sequence of the oral pathogenic bacterium Porphyromonas gingivalis strain W83.</title>
        <authorList>
            <person name="Nelson K.E."/>
            <person name="Fleischmann R.D."/>
            <person name="DeBoy R.T."/>
            <person name="Paulsen I.T."/>
            <person name="Fouts D.E."/>
            <person name="Eisen J.A."/>
            <person name="Daugherty S.C."/>
            <person name="Dodson R.J."/>
            <person name="Durkin A.S."/>
            <person name="Gwinn M.L."/>
            <person name="Haft D.H."/>
            <person name="Kolonay J.F."/>
            <person name="Nelson W.C."/>
            <person name="Mason T.M."/>
            <person name="Tallon L."/>
            <person name="Gray J."/>
            <person name="Granger D."/>
            <person name="Tettelin H."/>
            <person name="Dong H."/>
            <person name="Galvin J.L."/>
            <person name="Duncan M.J."/>
            <person name="Dewhirst F.E."/>
            <person name="Fraser C.M."/>
        </authorList>
    </citation>
    <scope>NUCLEOTIDE SEQUENCE [LARGE SCALE GENOMIC DNA]</scope>
    <source>
        <strain>ATCC BAA-308 / W83</strain>
    </source>
</reference>